<feature type="chain" id="PRO_1000074652" description="Ribonuclease H">
    <location>
        <begin position="1"/>
        <end position="148"/>
    </location>
</feature>
<feature type="domain" description="RNase H type-1" evidence="2">
    <location>
        <begin position="3"/>
        <end position="144"/>
    </location>
</feature>
<feature type="region of interest" description="Disordered" evidence="3">
    <location>
        <begin position="125"/>
        <end position="148"/>
    </location>
</feature>
<feature type="binding site" evidence="1">
    <location>
        <position position="12"/>
    </location>
    <ligand>
        <name>Mg(2+)</name>
        <dbReference type="ChEBI" id="CHEBI:18420"/>
        <label>1</label>
    </ligand>
</feature>
<feature type="binding site" evidence="1">
    <location>
        <position position="12"/>
    </location>
    <ligand>
        <name>Mg(2+)</name>
        <dbReference type="ChEBI" id="CHEBI:18420"/>
        <label>2</label>
    </ligand>
</feature>
<feature type="binding site" evidence="1">
    <location>
        <position position="50"/>
    </location>
    <ligand>
        <name>Mg(2+)</name>
        <dbReference type="ChEBI" id="CHEBI:18420"/>
        <label>1</label>
    </ligand>
</feature>
<feature type="binding site" evidence="1">
    <location>
        <position position="72"/>
    </location>
    <ligand>
        <name>Mg(2+)</name>
        <dbReference type="ChEBI" id="CHEBI:18420"/>
        <label>1</label>
    </ligand>
</feature>
<feature type="binding site" evidence="1">
    <location>
        <position position="136"/>
    </location>
    <ligand>
        <name>Mg(2+)</name>
        <dbReference type="ChEBI" id="CHEBI:18420"/>
        <label>2</label>
    </ligand>
</feature>
<dbReference type="EC" id="3.1.26.4" evidence="1"/>
<dbReference type="EMBL" id="CP000744">
    <property type="protein sequence ID" value="ABR84631.1"/>
    <property type="molecule type" value="Genomic_DNA"/>
</dbReference>
<dbReference type="RefSeq" id="WP_003153574.1">
    <property type="nucleotide sequence ID" value="NC_009656.1"/>
</dbReference>
<dbReference type="SMR" id="A6V705"/>
<dbReference type="GeneID" id="77221594"/>
<dbReference type="KEGG" id="pap:PSPA7_3481"/>
<dbReference type="HOGENOM" id="CLU_030894_6_0_6"/>
<dbReference type="Proteomes" id="UP000001582">
    <property type="component" value="Chromosome"/>
</dbReference>
<dbReference type="GO" id="GO:0005737">
    <property type="term" value="C:cytoplasm"/>
    <property type="evidence" value="ECO:0007669"/>
    <property type="project" value="UniProtKB-SubCell"/>
</dbReference>
<dbReference type="GO" id="GO:0000287">
    <property type="term" value="F:magnesium ion binding"/>
    <property type="evidence" value="ECO:0007669"/>
    <property type="project" value="UniProtKB-UniRule"/>
</dbReference>
<dbReference type="GO" id="GO:0003676">
    <property type="term" value="F:nucleic acid binding"/>
    <property type="evidence" value="ECO:0007669"/>
    <property type="project" value="InterPro"/>
</dbReference>
<dbReference type="GO" id="GO:0004523">
    <property type="term" value="F:RNA-DNA hybrid ribonuclease activity"/>
    <property type="evidence" value="ECO:0007669"/>
    <property type="project" value="UniProtKB-UniRule"/>
</dbReference>
<dbReference type="GO" id="GO:0043137">
    <property type="term" value="P:DNA replication, removal of RNA primer"/>
    <property type="evidence" value="ECO:0007669"/>
    <property type="project" value="TreeGrafter"/>
</dbReference>
<dbReference type="CDD" id="cd09278">
    <property type="entry name" value="RNase_HI_prokaryote_like"/>
    <property type="match status" value="1"/>
</dbReference>
<dbReference type="FunFam" id="3.30.420.10:FF:000119">
    <property type="entry name" value="Ribonuclease H"/>
    <property type="match status" value="1"/>
</dbReference>
<dbReference type="Gene3D" id="3.30.420.10">
    <property type="entry name" value="Ribonuclease H-like superfamily/Ribonuclease H"/>
    <property type="match status" value="1"/>
</dbReference>
<dbReference type="HAMAP" id="MF_00042">
    <property type="entry name" value="RNase_H"/>
    <property type="match status" value="1"/>
</dbReference>
<dbReference type="InterPro" id="IPR050092">
    <property type="entry name" value="RNase_H"/>
</dbReference>
<dbReference type="InterPro" id="IPR012337">
    <property type="entry name" value="RNaseH-like_sf"/>
</dbReference>
<dbReference type="InterPro" id="IPR002156">
    <property type="entry name" value="RNaseH_domain"/>
</dbReference>
<dbReference type="InterPro" id="IPR036397">
    <property type="entry name" value="RNaseH_sf"/>
</dbReference>
<dbReference type="InterPro" id="IPR022892">
    <property type="entry name" value="RNaseHI"/>
</dbReference>
<dbReference type="NCBIfam" id="NF001236">
    <property type="entry name" value="PRK00203.1"/>
    <property type="match status" value="1"/>
</dbReference>
<dbReference type="PANTHER" id="PTHR10642">
    <property type="entry name" value="RIBONUCLEASE H1"/>
    <property type="match status" value="1"/>
</dbReference>
<dbReference type="PANTHER" id="PTHR10642:SF26">
    <property type="entry name" value="RIBONUCLEASE H1"/>
    <property type="match status" value="1"/>
</dbReference>
<dbReference type="Pfam" id="PF00075">
    <property type="entry name" value="RNase_H"/>
    <property type="match status" value="1"/>
</dbReference>
<dbReference type="SUPFAM" id="SSF53098">
    <property type="entry name" value="Ribonuclease H-like"/>
    <property type="match status" value="1"/>
</dbReference>
<dbReference type="PROSITE" id="PS50879">
    <property type="entry name" value="RNASE_H_1"/>
    <property type="match status" value="1"/>
</dbReference>
<name>RNH_PSEP7</name>
<protein>
    <recommendedName>
        <fullName evidence="1">Ribonuclease H</fullName>
        <shortName evidence="1">RNase H</shortName>
        <ecNumber evidence="1">3.1.26.4</ecNumber>
    </recommendedName>
</protein>
<keyword id="KW-0963">Cytoplasm</keyword>
<keyword id="KW-0255">Endonuclease</keyword>
<keyword id="KW-0378">Hydrolase</keyword>
<keyword id="KW-0460">Magnesium</keyword>
<keyword id="KW-0479">Metal-binding</keyword>
<keyword id="KW-0540">Nuclease</keyword>
<reference key="1">
    <citation type="submission" date="2007-06" db="EMBL/GenBank/DDBJ databases">
        <authorList>
            <person name="Dodson R.J."/>
            <person name="Harkins D."/>
            <person name="Paulsen I.T."/>
        </authorList>
    </citation>
    <scope>NUCLEOTIDE SEQUENCE [LARGE SCALE GENOMIC DNA]</scope>
    <source>
        <strain>DSM 24068 / PA7</strain>
    </source>
</reference>
<sequence length="148" mass="16683">MTDKEQVVIYTDGACKGNPGRGGWGALLLYKGAERELWGGEPDTTNNRMELMAAIQALAALKRSCPIRLVTDSEYVMRGITEWLPNWKKRGWKTASKQPVKNADLWQALDEQVARHQVEWQWVRGHTGDPGNERADQLANRGVAELPR</sequence>
<organism>
    <name type="scientific">Pseudomonas paraeruginosa (strain DSM 24068 / PA7)</name>
    <name type="common">Pseudomonas aeruginosa (strain PA7)</name>
    <dbReference type="NCBI Taxonomy" id="381754"/>
    <lineage>
        <taxon>Bacteria</taxon>
        <taxon>Pseudomonadati</taxon>
        <taxon>Pseudomonadota</taxon>
        <taxon>Gammaproteobacteria</taxon>
        <taxon>Pseudomonadales</taxon>
        <taxon>Pseudomonadaceae</taxon>
        <taxon>Pseudomonas</taxon>
        <taxon>Pseudomonas paraeruginosa</taxon>
    </lineage>
</organism>
<comment type="function">
    <text evidence="1">Endonuclease that specifically degrades the RNA of RNA-DNA hybrids.</text>
</comment>
<comment type="catalytic activity">
    <reaction evidence="1">
        <text>Endonucleolytic cleavage to 5'-phosphomonoester.</text>
        <dbReference type="EC" id="3.1.26.4"/>
    </reaction>
</comment>
<comment type="cofactor">
    <cofactor evidence="1">
        <name>Mg(2+)</name>
        <dbReference type="ChEBI" id="CHEBI:18420"/>
    </cofactor>
    <text evidence="1">Binds 1 Mg(2+) ion per subunit. May bind a second metal ion at a regulatory site, or after substrate binding.</text>
</comment>
<comment type="subunit">
    <text evidence="1">Monomer.</text>
</comment>
<comment type="subcellular location">
    <subcellularLocation>
        <location evidence="1">Cytoplasm</location>
    </subcellularLocation>
</comment>
<comment type="similarity">
    <text evidence="1">Belongs to the RNase H family.</text>
</comment>
<evidence type="ECO:0000255" key="1">
    <source>
        <dbReference type="HAMAP-Rule" id="MF_00042"/>
    </source>
</evidence>
<evidence type="ECO:0000255" key="2">
    <source>
        <dbReference type="PROSITE-ProRule" id="PRU00408"/>
    </source>
</evidence>
<evidence type="ECO:0000256" key="3">
    <source>
        <dbReference type="SAM" id="MobiDB-lite"/>
    </source>
</evidence>
<gene>
    <name evidence="1" type="primary">rnhA</name>
    <name type="ordered locus">PSPA7_3481</name>
</gene>
<proteinExistence type="inferred from homology"/>
<accession>A6V705</accession>